<reference key="1">
    <citation type="journal article" date="2010" name="J. Bacteriol.">
        <title>Whole genome sequences of two Xylella fastidiosa strains (M12 and M23) causing almond leaf scorch disease in California.</title>
        <authorList>
            <person name="Chen J."/>
            <person name="Xie G."/>
            <person name="Han S."/>
            <person name="Chertkov O."/>
            <person name="Sims D."/>
            <person name="Civerolo E.L."/>
        </authorList>
    </citation>
    <scope>NUCLEOTIDE SEQUENCE [LARGE SCALE GENOMIC DNA]</scope>
    <source>
        <strain>M12</strain>
    </source>
</reference>
<evidence type="ECO:0000255" key="1">
    <source>
        <dbReference type="HAMAP-Rule" id="MF_01633"/>
    </source>
</evidence>
<dbReference type="EC" id="6.3.4.20" evidence="1"/>
<dbReference type="EMBL" id="CP000941">
    <property type="protein sequence ID" value="ACA12063.1"/>
    <property type="molecule type" value="Genomic_DNA"/>
</dbReference>
<dbReference type="RefSeq" id="WP_004085576.1">
    <property type="nucleotide sequence ID" value="NC_010513.1"/>
</dbReference>
<dbReference type="SMR" id="B0U2I4"/>
<dbReference type="KEGG" id="xfm:Xfasm12_1107"/>
<dbReference type="HOGENOM" id="CLU_081854_1_1_6"/>
<dbReference type="UniPathway" id="UPA00391"/>
<dbReference type="GO" id="GO:0005524">
    <property type="term" value="F:ATP binding"/>
    <property type="evidence" value="ECO:0007669"/>
    <property type="project" value="UniProtKB-UniRule"/>
</dbReference>
<dbReference type="GO" id="GO:0016879">
    <property type="term" value="F:ligase activity, forming carbon-nitrogen bonds"/>
    <property type="evidence" value="ECO:0007669"/>
    <property type="project" value="UniProtKB-UniRule"/>
</dbReference>
<dbReference type="GO" id="GO:0008270">
    <property type="term" value="F:zinc ion binding"/>
    <property type="evidence" value="ECO:0007669"/>
    <property type="project" value="UniProtKB-UniRule"/>
</dbReference>
<dbReference type="GO" id="GO:0008616">
    <property type="term" value="P:queuosine biosynthetic process"/>
    <property type="evidence" value="ECO:0007669"/>
    <property type="project" value="UniProtKB-UniRule"/>
</dbReference>
<dbReference type="CDD" id="cd01995">
    <property type="entry name" value="QueC-like"/>
    <property type="match status" value="1"/>
</dbReference>
<dbReference type="FunFam" id="3.40.50.620:FF:000131">
    <property type="entry name" value="7-cyano-7-deazaguanine synthase"/>
    <property type="match status" value="1"/>
</dbReference>
<dbReference type="Gene3D" id="3.40.50.620">
    <property type="entry name" value="HUPs"/>
    <property type="match status" value="1"/>
</dbReference>
<dbReference type="HAMAP" id="MF_01633">
    <property type="entry name" value="QueC"/>
    <property type="match status" value="1"/>
</dbReference>
<dbReference type="InterPro" id="IPR018317">
    <property type="entry name" value="QueC"/>
</dbReference>
<dbReference type="InterPro" id="IPR014729">
    <property type="entry name" value="Rossmann-like_a/b/a_fold"/>
</dbReference>
<dbReference type="NCBIfam" id="TIGR00364">
    <property type="entry name" value="7-cyano-7-deazaguanine synthase QueC"/>
    <property type="match status" value="1"/>
</dbReference>
<dbReference type="PANTHER" id="PTHR42914">
    <property type="entry name" value="7-CYANO-7-DEAZAGUANINE SYNTHASE"/>
    <property type="match status" value="1"/>
</dbReference>
<dbReference type="PANTHER" id="PTHR42914:SF1">
    <property type="entry name" value="7-CYANO-7-DEAZAGUANINE SYNTHASE"/>
    <property type="match status" value="1"/>
</dbReference>
<dbReference type="Pfam" id="PF06508">
    <property type="entry name" value="QueC"/>
    <property type="match status" value="1"/>
</dbReference>
<dbReference type="PIRSF" id="PIRSF006293">
    <property type="entry name" value="ExsB"/>
    <property type="match status" value="1"/>
</dbReference>
<dbReference type="SUPFAM" id="SSF52402">
    <property type="entry name" value="Adenine nucleotide alpha hydrolases-like"/>
    <property type="match status" value="1"/>
</dbReference>
<keyword id="KW-0067">ATP-binding</keyword>
<keyword id="KW-0436">Ligase</keyword>
<keyword id="KW-0479">Metal-binding</keyword>
<keyword id="KW-0547">Nucleotide-binding</keyword>
<keyword id="KW-0671">Queuosine biosynthesis</keyword>
<keyword id="KW-0862">Zinc</keyword>
<gene>
    <name evidence="1" type="primary">queC</name>
    <name type="ordered locus">Xfasm12_1107</name>
</gene>
<feature type="chain" id="PRO_1000186647" description="7-cyano-7-deazaguanine synthase">
    <location>
        <begin position="1"/>
        <end position="230"/>
    </location>
</feature>
<feature type="binding site" evidence="1">
    <location>
        <begin position="8"/>
        <end position="18"/>
    </location>
    <ligand>
        <name>ATP</name>
        <dbReference type="ChEBI" id="CHEBI:30616"/>
    </ligand>
</feature>
<feature type="binding site" evidence="1">
    <location>
        <position position="186"/>
    </location>
    <ligand>
        <name>Zn(2+)</name>
        <dbReference type="ChEBI" id="CHEBI:29105"/>
    </ligand>
</feature>
<feature type="binding site" evidence="1">
    <location>
        <position position="196"/>
    </location>
    <ligand>
        <name>Zn(2+)</name>
        <dbReference type="ChEBI" id="CHEBI:29105"/>
    </ligand>
</feature>
<feature type="binding site" evidence="1">
    <location>
        <position position="199"/>
    </location>
    <ligand>
        <name>Zn(2+)</name>
        <dbReference type="ChEBI" id="CHEBI:29105"/>
    </ligand>
</feature>
<feature type="binding site" evidence="1">
    <location>
        <position position="202"/>
    </location>
    <ligand>
        <name>Zn(2+)</name>
        <dbReference type="ChEBI" id="CHEBI:29105"/>
    </ligand>
</feature>
<comment type="function">
    <text evidence="1">Catalyzes the ATP-dependent conversion of 7-carboxy-7-deazaguanine (CDG) to 7-cyano-7-deazaguanine (preQ(0)).</text>
</comment>
<comment type="catalytic activity">
    <reaction evidence="1">
        <text>7-carboxy-7-deazaguanine + NH4(+) + ATP = 7-cyano-7-deazaguanine + ADP + phosphate + H2O + H(+)</text>
        <dbReference type="Rhea" id="RHEA:27982"/>
        <dbReference type="ChEBI" id="CHEBI:15377"/>
        <dbReference type="ChEBI" id="CHEBI:15378"/>
        <dbReference type="ChEBI" id="CHEBI:28938"/>
        <dbReference type="ChEBI" id="CHEBI:30616"/>
        <dbReference type="ChEBI" id="CHEBI:43474"/>
        <dbReference type="ChEBI" id="CHEBI:45075"/>
        <dbReference type="ChEBI" id="CHEBI:61036"/>
        <dbReference type="ChEBI" id="CHEBI:456216"/>
        <dbReference type="EC" id="6.3.4.20"/>
    </reaction>
</comment>
<comment type="cofactor">
    <cofactor evidence="1">
        <name>Zn(2+)</name>
        <dbReference type="ChEBI" id="CHEBI:29105"/>
    </cofactor>
    <text evidence="1">Binds 1 zinc ion per subunit.</text>
</comment>
<comment type="pathway">
    <text evidence="1">Purine metabolism; 7-cyano-7-deazaguanine biosynthesis.</text>
</comment>
<comment type="similarity">
    <text evidence="1">Belongs to the QueC family.</text>
</comment>
<sequence length="230" mass="24311">MKKAVILLSGGMDSAVVTAIAQSQGFMVHALSIRYGQRHTSELDAAVRIARALNVVAHKVVDVDLRSIGGSALTDDIEIPDAGGEGIPVTYVPARNTIMLSLALGWAEVIGAADIFCGVNAVDYSGYPDCRPQFITAFETLANLATKVGVEGTQLHVHAPLQFLSKAEIVHEGLLHGVDFGLTVSCYRADVDGRACGRCDACKLRAAGFADAGVVDPTRYMELPCSLLLL</sequence>
<accession>B0U2I4</accession>
<organism>
    <name type="scientific">Xylella fastidiosa (strain M12)</name>
    <dbReference type="NCBI Taxonomy" id="405440"/>
    <lineage>
        <taxon>Bacteria</taxon>
        <taxon>Pseudomonadati</taxon>
        <taxon>Pseudomonadota</taxon>
        <taxon>Gammaproteobacteria</taxon>
        <taxon>Lysobacterales</taxon>
        <taxon>Lysobacteraceae</taxon>
        <taxon>Xylella</taxon>
    </lineage>
</organism>
<name>QUEC_XYLFM</name>
<protein>
    <recommendedName>
        <fullName evidence="1">7-cyano-7-deazaguanine synthase</fullName>
        <ecNumber evidence="1">6.3.4.20</ecNumber>
    </recommendedName>
    <alternativeName>
        <fullName evidence="1">7-cyano-7-carbaguanine synthase</fullName>
    </alternativeName>
    <alternativeName>
        <fullName evidence="1">PreQ(0) synthase</fullName>
    </alternativeName>
    <alternativeName>
        <fullName evidence="1">Queuosine biosynthesis protein QueC</fullName>
    </alternativeName>
</protein>
<proteinExistence type="inferred from homology"/>